<organism>
    <name type="scientific">Pan troglodytes</name>
    <name type="common">Chimpanzee</name>
    <dbReference type="NCBI Taxonomy" id="9598"/>
    <lineage>
        <taxon>Eukaryota</taxon>
        <taxon>Metazoa</taxon>
        <taxon>Chordata</taxon>
        <taxon>Craniata</taxon>
        <taxon>Vertebrata</taxon>
        <taxon>Euteleostomi</taxon>
        <taxon>Mammalia</taxon>
        <taxon>Eutheria</taxon>
        <taxon>Euarchontoglires</taxon>
        <taxon>Primates</taxon>
        <taxon>Haplorrhini</taxon>
        <taxon>Catarrhini</taxon>
        <taxon>Hominidae</taxon>
        <taxon>Pan</taxon>
    </lineage>
</organism>
<accession>Q30KK3</accession>
<evidence type="ECO:0000250" key="1"/>
<evidence type="ECO:0000255" key="2"/>
<evidence type="ECO:0000256" key="3">
    <source>
        <dbReference type="SAM" id="MobiDB-lite"/>
    </source>
</evidence>
<evidence type="ECO:0000305" key="4"/>
<gene>
    <name type="primary">DEFB125</name>
</gene>
<feature type="signal peptide" evidence="2">
    <location>
        <begin position="1"/>
        <end position="20"/>
    </location>
</feature>
<feature type="chain" id="PRO_0000045366" description="Beta-defensin 125">
    <location>
        <begin position="21"/>
        <end position="157"/>
    </location>
</feature>
<feature type="region of interest" description="Disordered" evidence="3">
    <location>
        <begin position="109"/>
        <end position="157"/>
    </location>
</feature>
<feature type="compositionally biased region" description="Low complexity" evidence="3">
    <location>
        <begin position="110"/>
        <end position="121"/>
    </location>
</feature>
<feature type="compositionally biased region" description="Low complexity" evidence="3">
    <location>
        <begin position="129"/>
        <end position="145"/>
    </location>
</feature>
<feature type="disulfide bond" evidence="1">
    <location>
        <begin position="27"/>
        <end position="55"/>
    </location>
</feature>
<feature type="disulfide bond" evidence="1">
    <location>
        <begin position="35"/>
        <end position="49"/>
    </location>
</feature>
<feature type="disulfide bond" evidence="1">
    <location>
        <begin position="39"/>
        <end position="56"/>
    </location>
</feature>
<reference key="1">
    <citation type="journal article" date="2005" name="Physiol. Genomics">
        <title>Cross-species analysis of the mammalian beta-defensin gene family: presence of syntenic gene clusters and preferential expression in the male reproductive tract.</title>
        <authorList>
            <person name="Patil A.A."/>
            <person name="Cai Y."/>
            <person name="Sang Y."/>
            <person name="Blecha F."/>
            <person name="Zhang G."/>
        </authorList>
    </citation>
    <scope>NUCLEOTIDE SEQUENCE [MRNA]</scope>
</reference>
<dbReference type="EMBL" id="DQ012077">
    <property type="protein sequence ID" value="AAY59807.1"/>
    <property type="molecule type" value="mRNA"/>
</dbReference>
<dbReference type="RefSeq" id="NP_001123242.1">
    <property type="nucleotide sequence ID" value="NM_001129770.1"/>
</dbReference>
<dbReference type="SMR" id="Q30KK3"/>
<dbReference type="STRING" id="9598.ENSPTRP00000022489"/>
<dbReference type="PaxDb" id="9598-ENSPTRP00000022489"/>
<dbReference type="GeneID" id="749235"/>
<dbReference type="KEGG" id="ptr:749235"/>
<dbReference type="CTD" id="245938"/>
<dbReference type="eggNOG" id="ENOG502RU2M">
    <property type="taxonomic scope" value="Eukaryota"/>
</dbReference>
<dbReference type="InParanoid" id="Q30KK3"/>
<dbReference type="OrthoDB" id="15288at9604"/>
<dbReference type="Proteomes" id="UP000002277">
    <property type="component" value="Unplaced"/>
</dbReference>
<dbReference type="GO" id="GO:0005576">
    <property type="term" value="C:extracellular region"/>
    <property type="evidence" value="ECO:0007669"/>
    <property type="project" value="UniProtKB-SubCell"/>
</dbReference>
<dbReference type="GO" id="GO:0050829">
    <property type="term" value="P:defense response to Gram-negative bacterium"/>
    <property type="evidence" value="ECO:0007669"/>
    <property type="project" value="UniProtKB-ARBA"/>
</dbReference>
<dbReference type="GO" id="GO:0045087">
    <property type="term" value="P:innate immune response"/>
    <property type="evidence" value="ECO:0007669"/>
    <property type="project" value="InterPro"/>
</dbReference>
<dbReference type="Gene3D" id="3.10.360.10">
    <property type="entry name" value="Antimicrobial Peptide, Beta-defensin 2, Chain A"/>
    <property type="match status" value="1"/>
</dbReference>
<dbReference type="InterPro" id="IPR050544">
    <property type="entry name" value="Beta-defensin"/>
</dbReference>
<dbReference type="InterPro" id="IPR025933">
    <property type="entry name" value="Beta_defensin_dom"/>
</dbReference>
<dbReference type="PANTHER" id="PTHR15001">
    <property type="entry name" value="BETA-DEFENSIN 123-RELATED"/>
    <property type="match status" value="1"/>
</dbReference>
<dbReference type="PANTHER" id="PTHR15001:SF13">
    <property type="entry name" value="BETA-DEFENSIN 125"/>
    <property type="match status" value="1"/>
</dbReference>
<dbReference type="Pfam" id="PF13841">
    <property type="entry name" value="Defensin_beta_2"/>
    <property type="match status" value="1"/>
</dbReference>
<protein>
    <recommendedName>
        <fullName>Beta-defensin 125</fullName>
    </recommendedName>
    <alternativeName>
        <fullName>Defensin, beta 125</fullName>
    </alternativeName>
</protein>
<keyword id="KW-0044">Antibiotic</keyword>
<keyword id="KW-0929">Antimicrobial</keyword>
<keyword id="KW-0211">Defensin</keyword>
<keyword id="KW-1015">Disulfide bond</keyword>
<keyword id="KW-1185">Reference proteome</keyword>
<keyword id="KW-0964">Secreted</keyword>
<keyword id="KW-0732">Signal</keyword>
<comment type="function">
    <text evidence="4">Has antibacterial activity.</text>
</comment>
<comment type="subcellular location">
    <subcellularLocation>
        <location evidence="4">Secreted</location>
    </subcellularLocation>
</comment>
<comment type="similarity">
    <text evidence="4">Belongs to the beta-defensin family.</text>
</comment>
<name>DB125_PANTR</name>
<sequence length="157" mass="17756">MNILMLTFIICGLLTQVTKGSFEPQKCWKNNIGHCRRRCLDTERYILLCRNKLSCCISLIISQEYTRRPAFPVIHLEDITFDYSDVDSFTGSPVSMLNDLITFDTTKFGETMTPETNTPETTMPPPETTTPETTMPPSETATSETMPPPSQRALTHN</sequence>
<proteinExistence type="evidence at transcript level"/>